<evidence type="ECO:0000255" key="1">
    <source>
        <dbReference type="HAMAP-Rule" id="MF_00017"/>
    </source>
</evidence>
<feature type="chain" id="PRO_1000001568" description="Recombination protein RecR">
    <location>
        <begin position="1"/>
        <end position="200"/>
    </location>
</feature>
<feature type="domain" description="Toprim" evidence="1">
    <location>
        <begin position="82"/>
        <end position="177"/>
    </location>
</feature>
<feature type="zinc finger region" description="C4-type" evidence="1">
    <location>
        <begin position="59"/>
        <end position="74"/>
    </location>
</feature>
<name>RECR_NITHX</name>
<organism>
    <name type="scientific">Nitrobacter hamburgensis (strain DSM 10229 / NCIMB 13809 / X14)</name>
    <dbReference type="NCBI Taxonomy" id="323097"/>
    <lineage>
        <taxon>Bacteria</taxon>
        <taxon>Pseudomonadati</taxon>
        <taxon>Pseudomonadota</taxon>
        <taxon>Alphaproteobacteria</taxon>
        <taxon>Hyphomicrobiales</taxon>
        <taxon>Nitrobacteraceae</taxon>
        <taxon>Nitrobacter</taxon>
    </lineage>
</organism>
<reference key="1">
    <citation type="submission" date="2006-03" db="EMBL/GenBank/DDBJ databases">
        <title>Complete sequence of chromosome of Nitrobacter hamburgensis X14.</title>
        <authorList>
            <consortium name="US DOE Joint Genome Institute"/>
            <person name="Copeland A."/>
            <person name="Lucas S."/>
            <person name="Lapidus A."/>
            <person name="Barry K."/>
            <person name="Detter J.C."/>
            <person name="Glavina del Rio T."/>
            <person name="Hammon N."/>
            <person name="Israni S."/>
            <person name="Dalin E."/>
            <person name="Tice H."/>
            <person name="Pitluck S."/>
            <person name="Chain P."/>
            <person name="Malfatti S."/>
            <person name="Shin M."/>
            <person name="Vergez L."/>
            <person name="Schmutz J."/>
            <person name="Larimer F."/>
            <person name="Land M."/>
            <person name="Hauser L."/>
            <person name="Kyrpides N."/>
            <person name="Ivanova N."/>
            <person name="Ward B."/>
            <person name="Arp D."/>
            <person name="Klotz M."/>
            <person name="Stein L."/>
            <person name="O'Mullan G."/>
            <person name="Starkenburg S."/>
            <person name="Sayavedra L."/>
            <person name="Poret-Peterson A.T."/>
            <person name="Gentry M.E."/>
            <person name="Bruce D."/>
            <person name="Richardson P."/>
        </authorList>
    </citation>
    <scope>NUCLEOTIDE SEQUENCE [LARGE SCALE GENOMIC DNA]</scope>
    <source>
        <strain>DSM 10229 / NCIMB 13809 / X14</strain>
    </source>
</reference>
<keyword id="KW-0227">DNA damage</keyword>
<keyword id="KW-0233">DNA recombination</keyword>
<keyword id="KW-0234">DNA repair</keyword>
<keyword id="KW-0479">Metal-binding</keyword>
<keyword id="KW-1185">Reference proteome</keyword>
<keyword id="KW-0862">Zinc</keyword>
<keyword id="KW-0863">Zinc-finger</keyword>
<comment type="function">
    <text evidence="1">May play a role in DNA repair. It seems to be involved in an RecBC-independent recombinational process of DNA repair. It may act with RecF and RecO.</text>
</comment>
<comment type="similarity">
    <text evidence="1">Belongs to the RecR family.</text>
</comment>
<gene>
    <name evidence="1" type="primary">recR</name>
    <name type="ordered locus">Nham_0464</name>
</gene>
<dbReference type="EMBL" id="CP000319">
    <property type="protein sequence ID" value="ABE61354.1"/>
    <property type="molecule type" value="Genomic_DNA"/>
</dbReference>
<dbReference type="RefSeq" id="WP_011509058.1">
    <property type="nucleotide sequence ID" value="NC_007964.1"/>
</dbReference>
<dbReference type="SMR" id="Q1QQZ3"/>
<dbReference type="STRING" id="323097.Nham_0464"/>
<dbReference type="KEGG" id="nha:Nham_0464"/>
<dbReference type="eggNOG" id="COG0353">
    <property type="taxonomic scope" value="Bacteria"/>
</dbReference>
<dbReference type="HOGENOM" id="CLU_060739_1_1_5"/>
<dbReference type="OrthoDB" id="9802672at2"/>
<dbReference type="Proteomes" id="UP000001953">
    <property type="component" value="Chromosome"/>
</dbReference>
<dbReference type="GO" id="GO:0003677">
    <property type="term" value="F:DNA binding"/>
    <property type="evidence" value="ECO:0007669"/>
    <property type="project" value="UniProtKB-UniRule"/>
</dbReference>
<dbReference type="GO" id="GO:0008270">
    <property type="term" value="F:zinc ion binding"/>
    <property type="evidence" value="ECO:0007669"/>
    <property type="project" value="UniProtKB-KW"/>
</dbReference>
<dbReference type="GO" id="GO:0006310">
    <property type="term" value="P:DNA recombination"/>
    <property type="evidence" value="ECO:0007669"/>
    <property type="project" value="UniProtKB-UniRule"/>
</dbReference>
<dbReference type="GO" id="GO:0006281">
    <property type="term" value="P:DNA repair"/>
    <property type="evidence" value="ECO:0007669"/>
    <property type="project" value="UniProtKB-UniRule"/>
</dbReference>
<dbReference type="CDD" id="cd01025">
    <property type="entry name" value="TOPRIM_recR"/>
    <property type="match status" value="1"/>
</dbReference>
<dbReference type="Gene3D" id="3.40.1360.10">
    <property type="match status" value="1"/>
</dbReference>
<dbReference type="Gene3D" id="6.10.250.240">
    <property type="match status" value="1"/>
</dbReference>
<dbReference type="Gene3D" id="1.10.8.420">
    <property type="entry name" value="RecR Domain 1"/>
    <property type="match status" value="1"/>
</dbReference>
<dbReference type="HAMAP" id="MF_00017">
    <property type="entry name" value="RecR"/>
    <property type="match status" value="1"/>
</dbReference>
<dbReference type="InterPro" id="IPR000093">
    <property type="entry name" value="DNA_Rcmb_RecR"/>
</dbReference>
<dbReference type="InterPro" id="IPR023627">
    <property type="entry name" value="Rcmb_RecR"/>
</dbReference>
<dbReference type="InterPro" id="IPR015967">
    <property type="entry name" value="Rcmb_RecR_Znf"/>
</dbReference>
<dbReference type="InterPro" id="IPR006171">
    <property type="entry name" value="TOPRIM_dom"/>
</dbReference>
<dbReference type="InterPro" id="IPR034137">
    <property type="entry name" value="TOPRIM_RecR"/>
</dbReference>
<dbReference type="NCBIfam" id="TIGR00615">
    <property type="entry name" value="recR"/>
    <property type="match status" value="1"/>
</dbReference>
<dbReference type="PANTHER" id="PTHR30446">
    <property type="entry name" value="RECOMBINATION PROTEIN RECR"/>
    <property type="match status" value="1"/>
</dbReference>
<dbReference type="PANTHER" id="PTHR30446:SF0">
    <property type="entry name" value="RECOMBINATION PROTEIN RECR"/>
    <property type="match status" value="1"/>
</dbReference>
<dbReference type="Pfam" id="PF21175">
    <property type="entry name" value="RecR_C"/>
    <property type="match status" value="1"/>
</dbReference>
<dbReference type="Pfam" id="PF21176">
    <property type="entry name" value="RecR_HhH"/>
    <property type="match status" value="1"/>
</dbReference>
<dbReference type="Pfam" id="PF13662">
    <property type="entry name" value="Toprim_4"/>
    <property type="match status" value="1"/>
</dbReference>
<dbReference type="SMART" id="SM00493">
    <property type="entry name" value="TOPRIM"/>
    <property type="match status" value="1"/>
</dbReference>
<dbReference type="SUPFAM" id="SSF111304">
    <property type="entry name" value="Recombination protein RecR"/>
    <property type="match status" value="1"/>
</dbReference>
<dbReference type="PROSITE" id="PS01300">
    <property type="entry name" value="RECR"/>
    <property type="match status" value="1"/>
</dbReference>
<dbReference type="PROSITE" id="PS50880">
    <property type="entry name" value="TOPRIM"/>
    <property type="match status" value="1"/>
</dbReference>
<accession>Q1QQZ3</accession>
<sequence>MASVAGPEIDRLIQLLARLPGLGPRSARRAALHLIKKREALMTPLASALQVAIDRIQICEICGNIDTRSPCTVCTDMRRDPSIIVVVADVADLWALERAGATNGFYHVLGATLSPLDGVGPQDLTIDALVSRAHDPRVTEIVLALNATVDGQTTAHYITDLLGEANVKVTRLAHGVPVGGELDYLDEGTLSAAMRQRTPF</sequence>
<protein>
    <recommendedName>
        <fullName evidence="1">Recombination protein RecR</fullName>
    </recommendedName>
</protein>
<proteinExistence type="inferred from homology"/>